<name>SYH_XANAC</name>
<proteinExistence type="inferred from homology"/>
<organism>
    <name type="scientific">Xanthomonas axonopodis pv. citri (strain 306)</name>
    <dbReference type="NCBI Taxonomy" id="190486"/>
    <lineage>
        <taxon>Bacteria</taxon>
        <taxon>Pseudomonadati</taxon>
        <taxon>Pseudomonadota</taxon>
        <taxon>Gammaproteobacteria</taxon>
        <taxon>Lysobacterales</taxon>
        <taxon>Lysobacteraceae</taxon>
        <taxon>Xanthomonas</taxon>
    </lineage>
</organism>
<accession>Q8PLH2</accession>
<comment type="catalytic activity">
    <reaction>
        <text>tRNA(His) + L-histidine + ATP = L-histidyl-tRNA(His) + AMP + diphosphate + H(+)</text>
        <dbReference type="Rhea" id="RHEA:17313"/>
        <dbReference type="Rhea" id="RHEA-COMP:9665"/>
        <dbReference type="Rhea" id="RHEA-COMP:9689"/>
        <dbReference type="ChEBI" id="CHEBI:15378"/>
        <dbReference type="ChEBI" id="CHEBI:30616"/>
        <dbReference type="ChEBI" id="CHEBI:33019"/>
        <dbReference type="ChEBI" id="CHEBI:57595"/>
        <dbReference type="ChEBI" id="CHEBI:78442"/>
        <dbReference type="ChEBI" id="CHEBI:78527"/>
        <dbReference type="ChEBI" id="CHEBI:456215"/>
        <dbReference type="EC" id="6.1.1.21"/>
    </reaction>
</comment>
<comment type="subunit">
    <text evidence="1">Homodimer.</text>
</comment>
<comment type="subcellular location">
    <subcellularLocation>
        <location evidence="1">Cytoplasm</location>
    </subcellularLocation>
</comment>
<comment type="similarity">
    <text evidence="2">Belongs to the class-II aminoacyl-tRNA synthetase family.</text>
</comment>
<sequence>MIKPRTPPGIMELLPREQIAFQRMLDVIRRNYERFGFLPVETPVFELSDVLLTKSGGETERQVYFVQSTGALANAAAAADEGAENGGLPELALRFDLTVPLARYVAEHEHDLSFPFRRYQMQRVYRGERAQRGRFREFYQCDIDVIGKDALSIRYDAEVLAVIHAVFAELGIGDFKVQLNNRKLLRGFFESLGVAEGELQLAVLREVDKIDKRGADYVRDTLVGEGFGIPAEQVARILAFVAVRSNGHADALAQLQALEGSVGASATLGEGIAELREVLELVKALGVPESAYCLNFSIARGLDYYTGTVYETTLTDHPQIGSICSGGRYDSLASHYTKSKLPGVGISIGLTRLFWQLREAGLIQGIAESSVQAMVALMDETRLDDALDIARRLRIGGINTEVQMEPKKIGKQFQYAARAGIRFVVLAGDDELARGVVAVKDLVREQQFDVARDELASTLQVELEQARAMLVAGSVQGD</sequence>
<dbReference type="EC" id="6.1.1.21"/>
<dbReference type="EMBL" id="AE008923">
    <property type="protein sequence ID" value="AAM36688.1"/>
    <property type="molecule type" value="Genomic_DNA"/>
</dbReference>
<dbReference type="RefSeq" id="WP_011051168.1">
    <property type="nucleotide sequence ID" value="NC_003919.1"/>
</dbReference>
<dbReference type="SMR" id="Q8PLH2"/>
<dbReference type="GeneID" id="66910972"/>
<dbReference type="KEGG" id="xac:XAC1826"/>
<dbReference type="eggNOG" id="COG0124">
    <property type="taxonomic scope" value="Bacteria"/>
</dbReference>
<dbReference type="HOGENOM" id="CLU_025113_3_0_6"/>
<dbReference type="Proteomes" id="UP000000576">
    <property type="component" value="Chromosome"/>
</dbReference>
<dbReference type="GO" id="GO:0005737">
    <property type="term" value="C:cytoplasm"/>
    <property type="evidence" value="ECO:0007669"/>
    <property type="project" value="UniProtKB-SubCell"/>
</dbReference>
<dbReference type="GO" id="GO:0005524">
    <property type="term" value="F:ATP binding"/>
    <property type="evidence" value="ECO:0007669"/>
    <property type="project" value="UniProtKB-UniRule"/>
</dbReference>
<dbReference type="GO" id="GO:0004821">
    <property type="term" value="F:histidine-tRNA ligase activity"/>
    <property type="evidence" value="ECO:0007669"/>
    <property type="project" value="UniProtKB-UniRule"/>
</dbReference>
<dbReference type="GO" id="GO:0006427">
    <property type="term" value="P:histidyl-tRNA aminoacylation"/>
    <property type="evidence" value="ECO:0007669"/>
    <property type="project" value="UniProtKB-UniRule"/>
</dbReference>
<dbReference type="CDD" id="cd00773">
    <property type="entry name" value="HisRS-like_core"/>
    <property type="match status" value="1"/>
</dbReference>
<dbReference type="CDD" id="cd00859">
    <property type="entry name" value="HisRS_anticodon"/>
    <property type="match status" value="1"/>
</dbReference>
<dbReference type="FunFam" id="3.30.930.10:FF:000129">
    <property type="entry name" value="Histidine--tRNA ligase"/>
    <property type="match status" value="1"/>
</dbReference>
<dbReference type="FunFam" id="3.40.50.800:FF:000027">
    <property type="entry name" value="Histidine--tRNA ligase"/>
    <property type="match status" value="1"/>
</dbReference>
<dbReference type="Gene3D" id="3.40.50.800">
    <property type="entry name" value="Anticodon-binding domain"/>
    <property type="match status" value="1"/>
</dbReference>
<dbReference type="Gene3D" id="3.30.930.10">
    <property type="entry name" value="Bira Bifunctional Protein, Domain 2"/>
    <property type="match status" value="1"/>
</dbReference>
<dbReference type="HAMAP" id="MF_00127">
    <property type="entry name" value="His_tRNA_synth"/>
    <property type="match status" value="1"/>
</dbReference>
<dbReference type="InterPro" id="IPR006195">
    <property type="entry name" value="aa-tRNA-synth_II"/>
</dbReference>
<dbReference type="InterPro" id="IPR045864">
    <property type="entry name" value="aa-tRNA-synth_II/BPL/LPL"/>
</dbReference>
<dbReference type="InterPro" id="IPR004154">
    <property type="entry name" value="Anticodon-bd"/>
</dbReference>
<dbReference type="InterPro" id="IPR036621">
    <property type="entry name" value="Anticodon-bd_dom_sf"/>
</dbReference>
<dbReference type="InterPro" id="IPR015807">
    <property type="entry name" value="His-tRNA-ligase"/>
</dbReference>
<dbReference type="InterPro" id="IPR041715">
    <property type="entry name" value="HisRS-like_core"/>
</dbReference>
<dbReference type="InterPro" id="IPR004516">
    <property type="entry name" value="HisRS/HisZ"/>
</dbReference>
<dbReference type="InterPro" id="IPR033656">
    <property type="entry name" value="HisRS_anticodon"/>
</dbReference>
<dbReference type="NCBIfam" id="TIGR00442">
    <property type="entry name" value="hisS"/>
    <property type="match status" value="1"/>
</dbReference>
<dbReference type="PANTHER" id="PTHR11476:SF7">
    <property type="entry name" value="HISTIDINE--TRNA LIGASE"/>
    <property type="match status" value="1"/>
</dbReference>
<dbReference type="PANTHER" id="PTHR11476">
    <property type="entry name" value="HISTIDYL-TRNA SYNTHETASE"/>
    <property type="match status" value="1"/>
</dbReference>
<dbReference type="Pfam" id="PF03129">
    <property type="entry name" value="HGTP_anticodon"/>
    <property type="match status" value="1"/>
</dbReference>
<dbReference type="Pfam" id="PF13393">
    <property type="entry name" value="tRNA-synt_His"/>
    <property type="match status" value="1"/>
</dbReference>
<dbReference type="PIRSF" id="PIRSF001549">
    <property type="entry name" value="His-tRNA_synth"/>
    <property type="match status" value="1"/>
</dbReference>
<dbReference type="SUPFAM" id="SSF52954">
    <property type="entry name" value="Class II aaRS ABD-related"/>
    <property type="match status" value="1"/>
</dbReference>
<dbReference type="SUPFAM" id="SSF55681">
    <property type="entry name" value="Class II aaRS and biotin synthetases"/>
    <property type="match status" value="1"/>
</dbReference>
<dbReference type="PROSITE" id="PS50862">
    <property type="entry name" value="AA_TRNA_LIGASE_II"/>
    <property type="match status" value="1"/>
</dbReference>
<keyword id="KW-0030">Aminoacyl-tRNA synthetase</keyword>
<keyword id="KW-0067">ATP-binding</keyword>
<keyword id="KW-0963">Cytoplasm</keyword>
<keyword id="KW-0436">Ligase</keyword>
<keyword id="KW-0547">Nucleotide-binding</keyword>
<keyword id="KW-0648">Protein biosynthesis</keyword>
<gene>
    <name type="primary">hisS</name>
    <name type="ordered locus">XAC1826</name>
</gene>
<reference key="1">
    <citation type="journal article" date="2002" name="Nature">
        <title>Comparison of the genomes of two Xanthomonas pathogens with differing host specificities.</title>
        <authorList>
            <person name="da Silva A.C.R."/>
            <person name="Ferro J.A."/>
            <person name="Reinach F.C."/>
            <person name="Farah C.S."/>
            <person name="Furlan L.R."/>
            <person name="Quaggio R.B."/>
            <person name="Monteiro-Vitorello C.B."/>
            <person name="Van Sluys M.A."/>
            <person name="Almeida N.F. Jr."/>
            <person name="Alves L.M.C."/>
            <person name="do Amaral A.M."/>
            <person name="Bertolini M.C."/>
            <person name="Camargo L.E.A."/>
            <person name="Camarotte G."/>
            <person name="Cannavan F."/>
            <person name="Cardozo J."/>
            <person name="Chambergo F."/>
            <person name="Ciapina L.P."/>
            <person name="Cicarelli R.M.B."/>
            <person name="Coutinho L.L."/>
            <person name="Cursino-Santos J.R."/>
            <person name="El-Dorry H."/>
            <person name="Faria J.B."/>
            <person name="Ferreira A.J.S."/>
            <person name="Ferreira R.C.C."/>
            <person name="Ferro M.I.T."/>
            <person name="Formighieri E.F."/>
            <person name="Franco M.C."/>
            <person name="Greggio C.C."/>
            <person name="Gruber A."/>
            <person name="Katsuyama A.M."/>
            <person name="Kishi L.T."/>
            <person name="Leite R.P."/>
            <person name="Lemos E.G.M."/>
            <person name="Lemos M.V.F."/>
            <person name="Locali E.C."/>
            <person name="Machado M.A."/>
            <person name="Madeira A.M.B.N."/>
            <person name="Martinez-Rossi N.M."/>
            <person name="Martins E.C."/>
            <person name="Meidanis J."/>
            <person name="Menck C.F.M."/>
            <person name="Miyaki C.Y."/>
            <person name="Moon D.H."/>
            <person name="Moreira L.M."/>
            <person name="Novo M.T.M."/>
            <person name="Okura V.K."/>
            <person name="Oliveira M.C."/>
            <person name="Oliveira V.R."/>
            <person name="Pereira H.A."/>
            <person name="Rossi A."/>
            <person name="Sena J.A.D."/>
            <person name="Silva C."/>
            <person name="de Souza R.F."/>
            <person name="Spinola L.A.F."/>
            <person name="Takita M.A."/>
            <person name="Tamura R.E."/>
            <person name="Teixeira E.C."/>
            <person name="Tezza R.I.D."/>
            <person name="Trindade dos Santos M."/>
            <person name="Truffi D."/>
            <person name="Tsai S.M."/>
            <person name="White F.F."/>
            <person name="Setubal J.C."/>
            <person name="Kitajima J.P."/>
        </authorList>
    </citation>
    <scope>NUCLEOTIDE SEQUENCE [LARGE SCALE GENOMIC DNA]</scope>
    <source>
        <strain>306</strain>
    </source>
</reference>
<protein>
    <recommendedName>
        <fullName>Histidine--tRNA ligase</fullName>
        <ecNumber>6.1.1.21</ecNumber>
    </recommendedName>
    <alternativeName>
        <fullName>Histidyl-tRNA synthetase</fullName>
        <shortName>HisRS</shortName>
    </alternativeName>
</protein>
<feature type="chain" id="PRO_0000136299" description="Histidine--tRNA ligase">
    <location>
        <begin position="1"/>
        <end position="478"/>
    </location>
</feature>
<evidence type="ECO:0000250" key="1"/>
<evidence type="ECO:0000305" key="2"/>